<keyword id="KW-0002">3D-structure</keyword>
<keyword id="KW-0025">Alternative splicing</keyword>
<keyword id="KW-1003">Cell membrane</keyword>
<keyword id="KW-0966">Cell projection</keyword>
<keyword id="KW-0963">Cytoplasm</keyword>
<keyword id="KW-0206">Cytoskeleton</keyword>
<keyword id="KW-0254">Endocytosis</keyword>
<keyword id="KW-0967">Endosome</keyword>
<keyword id="KW-0472">Membrane</keyword>
<keyword id="KW-0524">Neurogenesis</keyword>
<keyword id="KW-0597">Phosphoprotein</keyword>
<keyword id="KW-1267">Proteomics identification</keyword>
<keyword id="KW-1185">Reference proteome</keyword>
<keyword id="KW-0677">Repeat</keyword>
<keyword id="KW-0770">Synapse</keyword>
<keyword id="KW-0771">Synaptosome</keyword>
<reference key="1">
    <citation type="journal article" date="1998" name="Mol. Cell. Neurosci.">
        <title>Atrophin-1, the DRPLA gene product, interacts with two families of WW domain-containing proteins.</title>
        <authorList>
            <person name="Wood J.D."/>
            <person name="Yuan J."/>
            <person name="Margolis R.L."/>
            <person name="Colomer V."/>
            <person name="Duan K."/>
            <person name="Kushi J."/>
            <person name="Kaminsky Z."/>
            <person name="Kleiderlein J.J. Jr."/>
            <person name="Sharp A.H."/>
            <person name="Ross C.A."/>
        </authorList>
    </citation>
    <scope>NUCLEOTIDE SEQUENCE [MRNA] (ISOFORM 1)</scope>
    <scope>TISSUE SPECIFICITY</scope>
    <scope>INTERACTION WITH DRPLA</scope>
    <source>
        <tissue>Brain</tissue>
    </source>
</reference>
<reference key="2">
    <citation type="journal article" date="1998" name="DNA Res.">
        <title>Prediction of the coding sequences of unidentified human genes. X. The complete sequences of 100 new cDNA clones from brain which can code for large proteins in vitro.</title>
        <authorList>
            <person name="Ishikawa K."/>
            <person name="Nagase T."/>
            <person name="Suyama M."/>
            <person name="Miyajima N."/>
            <person name="Tanaka A."/>
            <person name="Kotani H."/>
            <person name="Nomura N."/>
            <person name="Ohara O."/>
        </authorList>
    </citation>
    <scope>NUCLEOTIDE SEQUENCE [LARGE SCALE MRNA] (ISOFORM 2)</scope>
    <source>
        <tissue>Brain</tissue>
    </source>
</reference>
<reference key="3">
    <citation type="journal article" date="2003" name="Nature">
        <title>The DNA sequence of human chromosome 7.</title>
        <authorList>
            <person name="Hillier L.W."/>
            <person name="Fulton R.S."/>
            <person name="Fulton L.A."/>
            <person name="Graves T.A."/>
            <person name="Pepin K.H."/>
            <person name="Wagner-McPherson C."/>
            <person name="Layman D."/>
            <person name="Maas J."/>
            <person name="Jaeger S."/>
            <person name="Walker R."/>
            <person name="Wylie K."/>
            <person name="Sekhon M."/>
            <person name="Becker M.C."/>
            <person name="O'Laughlin M.D."/>
            <person name="Schaller M.E."/>
            <person name="Fewell G.A."/>
            <person name="Delehaunty K.D."/>
            <person name="Miner T.L."/>
            <person name="Nash W.E."/>
            <person name="Cordes M."/>
            <person name="Du H."/>
            <person name="Sun H."/>
            <person name="Edwards J."/>
            <person name="Bradshaw-Cordum H."/>
            <person name="Ali J."/>
            <person name="Andrews S."/>
            <person name="Isak A."/>
            <person name="Vanbrunt A."/>
            <person name="Nguyen C."/>
            <person name="Du F."/>
            <person name="Lamar B."/>
            <person name="Courtney L."/>
            <person name="Kalicki J."/>
            <person name="Ozersky P."/>
            <person name="Bielicki L."/>
            <person name="Scott K."/>
            <person name="Holmes A."/>
            <person name="Harkins R."/>
            <person name="Harris A."/>
            <person name="Strong C.M."/>
            <person name="Hou S."/>
            <person name="Tomlinson C."/>
            <person name="Dauphin-Kohlberg S."/>
            <person name="Kozlowicz-Reilly A."/>
            <person name="Leonard S."/>
            <person name="Rohlfing T."/>
            <person name="Rock S.M."/>
            <person name="Tin-Wollam A.-M."/>
            <person name="Abbott A."/>
            <person name="Minx P."/>
            <person name="Maupin R."/>
            <person name="Strowmatt C."/>
            <person name="Latreille P."/>
            <person name="Miller N."/>
            <person name="Johnson D."/>
            <person name="Murray J."/>
            <person name="Woessner J.P."/>
            <person name="Wendl M.C."/>
            <person name="Yang S.-P."/>
            <person name="Schultz B.R."/>
            <person name="Wallis J.W."/>
            <person name="Spieth J."/>
            <person name="Bieri T.A."/>
            <person name="Nelson J.O."/>
            <person name="Berkowicz N."/>
            <person name="Wohldmann P.E."/>
            <person name="Cook L.L."/>
            <person name="Hickenbotham M.T."/>
            <person name="Eldred J."/>
            <person name="Williams D."/>
            <person name="Bedell J.A."/>
            <person name="Mardis E.R."/>
            <person name="Clifton S.W."/>
            <person name="Chissoe S.L."/>
            <person name="Marra M.A."/>
            <person name="Raymond C."/>
            <person name="Haugen E."/>
            <person name="Gillett W."/>
            <person name="Zhou Y."/>
            <person name="James R."/>
            <person name="Phelps K."/>
            <person name="Iadanoto S."/>
            <person name="Bubb K."/>
            <person name="Simms E."/>
            <person name="Levy R."/>
            <person name="Clendenning J."/>
            <person name="Kaul R."/>
            <person name="Kent W.J."/>
            <person name="Furey T.S."/>
            <person name="Baertsch R.A."/>
            <person name="Brent M.R."/>
            <person name="Keibler E."/>
            <person name="Flicek P."/>
            <person name="Bork P."/>
            <person name="Suyama M."/>
            <person name="Bailey J.A."/>
            <person name="Portnoy M.E."/>
            <person name="Torrents D."/>
            <person name="Chinwalla A.T."/>
            <person name="Gish W.R."/>
            <person name="Eddy S.R."/>
            <person name="McPherson J.D."/>
            <person name="Olson M.V."/>
            <person name="Eichler E.E."/>
            <person name="Green E.D."/>
            <person name="Waterston R.H."/>
            <person name="Wilson R.K."/>
        </authorList>
    </citation>
    <scope>NUCLEOTIDE SEQUENCE [LARGE SCALE GENOMIC DNA]</scope>
</reference>
<reference key="4">
    <citation type="journal article" date="2003" name="Science">
        <title>Human chromosome 7: DNA sequence and biology.</title>
        <authorList>
            <person name="Scherer S.W."/>
            <person name="Cheung J."/>
            <person name="MacDonald J.R."/>
            <person name="Osborne L.R."/>
            <person name="Nakabayashi K."/>
            <person name="Herbrick J.-A."/>
            <person name="Carson A.R."/>
            <person name="Parker-Katiraee L."/>
            <person name="Skaug J."/>
            <person name="Khaja R."/>
            <person name="Zhang J."/>
            <person name="Hudek A.K."/>
            <person name="Li M."/>
            <person name="Haddad M."/>
            <person name="Duggan G.E."/>
            <person name="Fernandez B.A."/>
            <person name="Kanematsu E."/>
            <person name="Gentles S."/>
            <person name="Christopoulos C.C."/>
            <person name="Choufani S."/>
            <person name="Kwasnicka D."/>
            <person name="Zheng X.H."/>
            <person name="Lai Z."/>
            <person name="Nusskern D.R."/>
            <person name="Zhang Q."/>
            <person name="Gu Z."/>
            <person name="Lu F."/>
            <person name="Zeesman S."/>
            <person name="Nowaczyk M.J."/>
            <person name="Teshima I."/>
            <person name="Chitayat D."/>
            <person name="Shuman C."/>
            <person name="Weksberg R."/>
            <person name="Zackai E.H."/>
            <person name="Grebe T.A."/>
            <person name="Cox S.R."/>
            <person name="Kirkpatrick S.J."/>
            <person name="Rahman N."/>
            <person name="Friedman J.M."/>
            <person name="Heng H.H.Q."/>
            <person name="Pelicci P.G."/>
            <person name="Lo-Coco F."/>
            <person name="Belloni E."/>
            <person name="Shaffer L.G."/>
            <person name="Pober B."/>
            <person name="Morton C.C."/>
            <person name="Gusella J.F."/>
            <person name="Bruns G.A.P."/>
            <person name="Korf B.R."/>
            <person name="Quade B.J."/>
            <person name="Ligon A.H."/>
            <person name="Ferguson H."/>
            <person name="Higgins A.W."/>
            <person name="Leach N.T."/>
            <person name="Herrick S.R."/>
            <person name="Lemyre E."/>
            <person name="Farra C.G."/>
            <person name="Kim H.-G."/>
            <person name="Summers A.M."/>
            <person name="Gripp K.W."/>
            <person name="Roberts W."/>
            <person name="Szatmari P."/>
            <person name="Winsor E.J.T."/>
            <person name="Grzeschik K.-H."/>
            <person name="Teebi A."/>
            <person name="Minassian B.A."/>
            <person name="Kere J."/>
            <person name="Armengol L."/>
            <person name="Pujana M.A."/>
            <person name="Estivill X."/>
            <person name="Wilson M.D."/>
            <person name="Koop B.F."/>
            <person name="Tosi S."/>
            <person name="Moore G.E."/>
            <person name="Boright A.P."/>
            <person name="Zlotorynski E."/>
            <person name="Kerem B."/>
            <person name="Kroisel P.M."/>
            <person name="Petek E."/>
            <person name="Oscier D.G."/>
            <person name="Mould S.J."/>
            <person name="Doehner H."/>
            <person name="Doehner K."/>
            <person name="Rommens J.M."/>
            <person name="Vincent J.B."/>
            <person name="Venter J.C."/>
            <person name="Li P.W."/>
            <person name="Mural R.J."/>
            <person name="Adams M.D."/>
            <person name="Tsui L.-C."/>
        </authorList>
    </citation>
    <scope>NUCLEOTIDE SEQUENCE [LARGE SCALE GENOMIC DNA]</scope>
</reference>
<reference key="5">
    <citation type="journal article" date="2004" name="Genome Res.">
        <title>The status, quality, and expansion of the NIH full-length cDNA project: the Mammalian Gene Collection (MGC).</title>
        <authorList>
            <consortium name="The MGC Project Team"/>
        </authorList>
    </citation>
    <scope>NUCLEOTIDE SEQUENCE [LARGE SCALE MRNA] (ISOFORM 2)</scope>
</reference>
<reference key="6">
    <citation type="journal article" date="2000" name="Proc. Natl. Acad. Sci. U.S.A.">
        <title>Evidence for regulation of the PTEN tumor suppressor by a membrane-localized multi-PDZ domain containing scaffold protein MAGI-2.</title>
        <authorList>
            <person name="Wu X."/>
            <person name="Hepner K."/>
            <person name="Castelino-Prabhu S."/>
            <person name="Do D."/>
            <person name="Kaye M.B."/>
            <person name="Yuan X.-J."/>
            <person name="Wood J."/>
            <person name="Ross C."/>
            <person name="Sawyers C.L."/>
            <person name="Whang Y.E."/>
        </authorList>
    </citation>
    <scope>FUNCTION</scope>
    <scope>SUBCELLULAR LOCATION</scope>
    <scope>INTERACTION WITH PTEN</scope>
</reference>
<reference key="7">
    <citation type="journal article" date="2001" name="J. Biol. Chem.">
        <title>Phosphorylation of the PTEN tail acts as an inhibitory switch by preventing its recruitment into a protein complex.</title>
        <authorList>
            <person name="Vazquez F."/>
            <person name="Grossman S.R."/>
            <person name="Takahashi Y."/>
            <person name="Rokas M.V."/>
            <person name="Nakamura N."/>
            <person name="Sellers W.R."/>
        </authorList>
    </citation>
    <scope>INTERACTION WITH PTEN</scope>
</reference>
<reference key="8">
    <citation type="journal article" date="2006" name="J. Neurochem.">
        <title>Postsynaptic recruitment of Dendrin depends on both dendritic mRNA transport and synaptic anchoring.</title>
        <authorList>
            <person name="Kremerskothen J."/>
            <person name="Kindler S."/>
            <person name="Finger I."/>
            <person name="Veltel S."/>
            <person name="Barnekow A."/>
        </authorList>
    </citation>
    <scope>INTERACTION WITH DDN</scope>
</reference>
<reference key="9">
    <citation type="journal article" date="2013" name="J. Cell Biol.">
        <title>The adhesion protein IgSF9b is coupled to neuroligin 2 via S-SCAM to promote inhibitory synapse development.</title>
        <authorList>
            <person name="Woo J."/>
            <person name="Kwon S.K."/>
            <person name="Nam J."/>
            <person name="Choi S."/>
            <person name="Takahashi H."/>
            <person name="Krueger D."/>
            <person name="Park J."/>
            <person name="Lee Y."/>
            <person name="Bae J.Y."/>
            <person name="Lee D."/>
            <person name="Ko J."/>
            <person name="Kim H."/>
            <person name="Kim M.H."/>
            <person name="Bae Y.C."/>
            <person name="Chang S."/>
            <person name="Craig A.M."/>
            <person name="Kim E."/>
        </authorList>
    </citation>
    <scope>IDENTIFICATION IN A COMPLEX WITH IGSF9B AND NLGN2</scope>
</reference>
<reference key="10">
    <citation type="journal article" date="2014" name="Hum. Mol. Genet.">
        <title>Phosphorylation of the Usher syndrome 1G protein SANS controls Magi2-mediated endocytosis.</title>
        <authorList>
            <person name="Bauss K."/>
            <person name="Knapp B."/>
            <person name="Jores P."/>
            <person name="Roepman R."/>
            <person name="Kremer H."/>
            <person name="Wijk E.V."/>
            <person name="Maerker T."/>
            <person name="Wolfrum U."/>
        </authorList>
    </citation>
    <scope>INTERACTION WITH USH1G</scope>
</reference>
<reference key="11">
    <citation type="submission" date="2004-02" db="PDB data bank">
        <title>Solution structure of the PDZ domains of human atrophin-1 interacting protein 1 (KIAA0705 protein).</title>
        <authorList>
            <consortium name="RIKEN structural genomics initiative (RSGI)"/>
        </authorList>
    </citation>
    <scope>STRUCTURE BY NMR OF 412-1230</scope>
</reference>
<reference key="12">
    <citation type="journal article" date="2017" name="J. Am. Soc. Nephrol.">
        <title>MAGI2 mutations cause congenital nephrotic syndrome.</title>
        <authorList>
            <consortium name="NephroS"/>
            <consortium name="UK study of Nephrotic Syndrome"/>
            <person name="Bierzynska A."/>
            <person name="Soderquest K."/>
            <person name="Dean P."/>
            <person name="Colby E."/>
            <person name="Rollason R."/>
            <person name="Jones C."/>
            <person name="Inward C.D."/>
            <person name="McCarthy H.J."/>
            <person name="Simpson M.A."/>
            <person name="Lord G.M."/>
            <person name="Williams M."/>
            <person name="Welsh G.I."/>
            <person name="Koziell A.B."/>
            <person name="Saleem M.A."/>
        </authorList>
    </citation>
    <scope>INVOLVEMENT IN NPHS15</scope>
</reference>
<comment type="function">
    <text evidence="2 3 8">Seems to act as a scaffold molecule at synaptic junctions by assembling neurotransmitter receptors and cell adhesion proteins (By similarity). Plays a role in nerve growth factor (NGF)-induced recruitment of RAPGEF2 to late endosomes and neurite outgrowth (By similarity). May play a role in regulating activin-mediated signaling in neuronal cells (By similarity). Enhances the ability of PTEN to suppress AKT1 activation (PubMed:10760291). Plays a role in receptor-mediated clathrin-dependent endocytosis which is required for ciliogenesis (By similarity).</text>
</comment>
<comment type="subunit">
    <text evidence="2 3 8 9 10 11 12 14">Interacts (via its WW domains) with DRPLA (PubMed:9647693). Interacts (via its second PDZ domain) with PTEN (via unphosphorylated C-terminus); this interaction diminishes the degradation rate of PTEN (PubMed:10760291, PubMed:11707428). Interacts (via guanylate kinase domain) with DLGAP1 (By similarity). Interacts (via the PDZ domains) with GRIN2A, GRID2 and NLGN1 (By similarity). Interacts with CTNND2, CTNNB1, MAGUIN-1, ACVR2A, SMAD2 and SMAD3 (By similarity). Part of a complex consisting of MAGI2/ARIP1, ACVR2A, ACVR1B and SMAD3 (By similarity). May interact with HTR2A (By similarity). Interacts with IGSF9, RAPGEF2 and HTR4 (By similarity). Identified in a complex with ACTN4, CASK, IQGAP1, NPHS1, SPTAN1 and SPTBN1 (By similarity). Found in a complex, at least composed of KIDINS220, MAGI2, NTRK1 and RAPGEF2; the complex is mainly formed at late endosomes in a NGF-dependent manner (By similarity). Interacts with RAPGEF2; the interaction occurs before or after nerve growth factor (NGF) stimulation (By similarity). Interacts (via PDZ domain) with KIDINS220 (via C-terminal domain) (By similarity). Interacts with DDN (PubMed:16464232). Interacts with DLL1 (By similarity). Found in a complex with IGSF9B and NLGN2; the interaction with IGSF9B is mediated via the PDZ 5 and PDZ 6 domains, while the interaction with NLGN2 is mediated via the WW1, WW2 and PDZ2 domains (PubMed:23751499). Interacts (via PDZ 6 domain) with USH1G (via SAM domain); the interaction is triggered by phosphorylation of USH1G by CK2 and negatively regulates MAGI2-mediated endocytosis (PubMed:24608321).</text>
</comment>
<comment type="interaction">
    <interactant intactId="EBI-311035">
        <id>Q86UL8</id>
    </interactant>
    <interactant intactId="EBI-991009">
        <id>P08588</id>
        <label>ADRB1</label>
    </interactant>
    <organismsDiffer>false</organismsDiffer>
    <experiments>3</experiments>
</comment>
<comment type="interaction">
    <interactant intactId="EBI-12081182">
        <id>Q86UL8-2</id>
    </interactant>
    <interactant intactId="EBI-11961832">
        <id>Q6IS01</id>
        <label>DLGAP1</label>
    </interactant>
    <organismsDiffer>false</organismsDiffer>
    <experiments>5</experiments>
</comment>
<comment type="interaction">
    <interactant intactId="EBI-12081182">
        <id>Q86UL8-2</id>
    </interactant>
    <interactant intactId="EBI-12019838">
        <id>Q9P1A6-3</id>
        <label>DLGAP2</label>
    </interactant>
    <organismsDiffer>false</organismsDiffer>
    <experiments>3</experiments>
</comment>
<comment type="interaction">
    <interactant intactId="EBI-12081182">
        <id>Q86UL8-2</id>
    </interactant>
    <interactant intactId="EBI-1752541">
        <id>O95886</id>
        <label>DLGAP3</label>
    </interactant>
    <organismsDiffer>false</organismsDiffer>
    <experiments>3</experiments>
</comment>
<comment type="interaction">
    <interactant intactId="EBI-12081182">
        <id>Q86UL8-2</id>
    </interactant>
    <interactant intactId="EBI-10269566">
        <id>Q8NDC4</id>
        <label>MORN4</label>
    </interactant>
    <organismsDiffer>false</organismsDiffer>
    <experiments>3</experiments>
</comment>
<comment type="interaction">
    <interactant intactId="EBI-12081182">
        <id>Q86UL8-2</id>
    </interactant>
    <interactant intactId="EBI-1644207">
        <id>Q5EBL8</id>
        <label>PDZD11</label>
    </interactant>
    <organismsDiffer>false</organismsDiffer>
    <experiments>3</experiments>
</comment>
<comment type="interaction">
    <interactant intactId="EBI-12081182">
        <id>Q86UL8-2</id>
    </interactant>
    <interactant intactId="EBI-742388">
        <id>Q9H8W4</id>
        <label>PLEKHF2</label>
    </interactant>
    <organismsDiffer>false</organismsDiffer>
    <experiments>3</experiments>
</comment>
<comment type="interaction">
    <interactant intactId="EBI-12081182">
        <id>Q86UL8-2</id>
    </interactant>
    <interactant intactId="EBI-372475">
        <id>P14678-2</id>
        <label>SNRPB</label>
    </interactant>
    <organismsDiffer>false</organismsDiffer>
    <experiments>3</experiments>
</comment>
<comment type="subcellular location">
    <subcellularLocation>
        <location evidence="1">Cytoplasm</location>
    </subcellularLocation>
    <subcellularLocation>
        <location evidence="1">Late endosome</location>
    </subcellularLocation>
    <subcellularLocation>
        <location evidence="1">Synapse</location>
        <location evidence="1">Synaptosome</location>
    </subcellularLocation>
    <subcellularLocation>
        <location evidence="1">Cell membrane</location>
        <topology evidence="1">Peripheral membrane protein</topology>
    </subcellularLocation>
    <subcellularLocation>
        <location evidence="3">Cytoplasm</location>
        <location evidence="3">Cytoskeleton</location>
        <location evidence="3">Microtubule organizing center</location>
        <location evidence="3">Centrosome</location>
    </subcellularLocation>
    <subcellularLocation>
        <location evidence="3">Cell projection</location>
        <location evidence="3">Cilium</location>
    </subcellularLocation>
    <subcellularLocation>
        <location evidence="3">Cytoplasm</location>
        <location evidence="3">Cytoskeleton</location>
        <location evidence="3">Microtubule organizing center</location>
        <location evidence="3">Centrosome</location>
        <location evidence="3">Centriole</location>
    </subcellularLocation>
    <subcellularLocation>
        <location evidence="3">Photoreceptor inner segment</location>
    </subcellularLocation>
    <subcellularLocation>
        <location evidence="3">Cell projection</location>
        <location evidence="3">Cilium</location>
        <location evidence="3">Photoreceptor outer segment</location>
    </subcellularLocation>
    <text evidence="1">Localized diffusely in the cytoplasm before nerve growth factor (NGF) stimulation. Recruited to late endosomes after NGF stimulation. Membrane-associated in synaptosomes (By similarity).</text>
</comment>
<comment type="alternative products">
    <event type="alternative splicing"/>
    <isoform>
        <id>Q86UL8-1</id>
        <name>1</name>
        <sequence type="displayed"/>
    </isoform>
    <isoform>
        <id>Q86UL8-2</id>
        <name>2</name>
        <sequence type="described" ref="VSP_008435"/>
    </isoform>
</comment>
<comment type="tissue specificity">
    <text evidence="14">Specifically expressed in brain.</text>
</comment>
<comment type="disease" evidence="13">
    <disease id="DI-05067">
        <name>Nephrotic syndrome 15</name>
        <acronym>NPHS15</acronym>
        <description>A form of nephrotic syndrome, a renal disease clinically characterized by severe proteinuria, resulting in complications such as hypoalbuminemia, hyperlipidemia and edema. Kidney biopsies show non-specific histologic changes such as focal segmental glomerulosclerosis and diffuse mesangial proliferation. NPHS15 is an autosomal recessive form with onset in the first months of life. Disease severity is variable. Some patients show rapid progression to end-stage renal failure.</description>
        <dbReference type="MIM" id="617609"/>
    </disease>
    <text>The disease is caused by variants affecting the gene represented in this entry.</text>
</comment>
<comment type="similarity">
    <text evidence="17">Belongs to the MAGUK family.</text>
</comment>
<comment type="sequence caution" evidence="17">
    <conflict type="erroneous initiation">
        <sequence resource="EMBL-CDS" id="BAA31680"/>
    </conflict>
</comment>
<organism>
    <name type="scientific">Homo sapiens</name>
    <name type="common">Human</name>
    <dbReference type="NCBI Taxonomy" id="9606"/>
    <lineage>
        <taxon>Eukaryota</taxon>
        <taxon>Metazoa</taxon>
        <taxon>Chordata</taxon>
        <taxon>Craniata</taxon>
        <taxon>Vertebrata</taxon>
        <taxon>Euteleostomi</taxon>
        <taxon>Mammalia</taxon>
        <taxon>Eutheria</taxon>
        <taxon>Euarchontoglires</taxon>
        <taxon>Primates</taxon>
        <taxon>Haplorrhini</taxon>
        <taxon>Catarrhini</taxon>
        <taxon>Hominidae</taxon>
        <taxon>Homo</taxon>
    </lineage>
</organism>
<feature type="chain" id="PRO_0000094586" description="Membrane-associated guanylate kinase, WW and PDZ domain-containing protein 2">
    <location>
        <begin position="1"/>
        <end position="1455"/>
    </location>
</feature>
<feature type="domain" description="PDZ 1" evidence="5">
    <location>
        <begin position="17"/>
        <end position="101"/>
    </location>
</feature>
<feature type="domain" description="Guanylate kinase-like" evidence="4">
    <location>
        <begin position="109"/>
        <end position="283"/>
    </location>
</feature>
<feature type="domain" description="WW 1" evidence="6">
    <location>
        <begin position="302"/>
        <end position="335"/>
    </location>
</feature>
<feature type="domain" description="WW 2" evidence="6">
    <location>
        <begin position="348"/>
        <end position="381"/>
    </location>
</feature>
<feature type="domain" description="PDZ 2" evidence="5">
    <location>
        <begin position="426"/>
        <end position="510"/>
    </location>
</feature>
<feature type="domain" description="PDZ 3" evidence="5">
    <location>
        <begin position="605"/>
        <end position="683"/>
    </location>
</feature>
<feature type="domain" description="PDZ 4" evidence="5">
    <location>
        <begin position="778"/>
        <end position="860"/>
    </location>
</feature>
<feature type="domain" description="PDZ 5" evidence="5">
    <location>
        <begin position="920"/>
        <end position="1010"/>
    </location>
</feature>
<feature type="domain" description="PDZ 6" evidence="5">
    <location>
        <begin position="1147"/>
        <end position="1229"/>
    </location>
</feature>
<feature type="region of interest" description="Disordered" evidence="7">
    <location>
        <begin position="205"/>
        <end position="306"/>
    </location>
</feature>
<feature type="region of interest" description="Interaction with DDN" evidence="10">
    <location>
        <begin position="302"/>
        <end position="381"/>
    </location>
</feature>
<feature type="region of interest" description="Disordered" evidence="7">
    <location>
        <begin position="869"/>
        <end position="913"/>
    </location>
</feature>
<feature type="region of interest" description="Disordered" evidence="7">
    <location>
        <begin position="1011"/>
        <end position="1136"/>
    </location>
</feature>
<feature type="region of interest" description="Disordered" evidence="7">
    <location>
        <begin position="1231"/>
        <end position="1455"/>
    </location>
</feature>
<feature type="compositionally biased region" description="Low complexity" evidence="7">
    <location>
        <begin position="241"/>
        <end position="252"/>
    </location>
</feature>
<feature type="compositionally biased region" description="Basic and acidic residues" evidence="7">
    <location>
        <begin position="281"/>
        <end position="296"/>
    </location>
</feature>
<feature type="compositionally biased region" description="Low complexity" evidence="7">
    <location>
        <begin position="895"/>
        <end position="908"/>
    </location>
</feature>
<feature type="compositionally biased region" description="Polar residues" evidence="7">
    <location>
        <begin position="1011"/>
        <end position="1040"/>
    </location>
</feature>
<feature type="compositionally biased region" description="Basic and acidic residues" evidence="7">
    <location>
        <begin position="1067"/>
        <end position="1083"/>
    </location>
</feature>
<feature type="compositionally biased region" description="Low complexity" evidence="7">
    <location>
        <begin position="1238"/>
        <end position="1249"/>
    </location>
</feature>
<feature type="compositionally biased region" description="Basic and acidic residues" evidence="7">
    <location>
        <begin position="1287"/>
        <end position="1299"/>
    </location>
</feature>
<feature type="compositionally biased region" description="Low complexity" evidence="7">
    <location>
        <begin position="1346"/>
        <end position="1363"/>
    </location>
</feature>
<feature type="compositionally biased region" description="Low complexity" evidence="7">
    <location>
        <begin position="1399"/>
        <end position="1412"/>
    </location>
</feature>
<feature type="compositionally biased region" description="Low complexity" evidence="7">
    <location>
        <begin position="1422"/>
        <end position="1433"/>
    </location>
</feature>
<feature type="modified residue" description="Phosphotyrosine" evidence="3">
    <location>
        <position position="362"/>
    </location>
</feature>
<feature type="modified residue" description="Phosphoserine" evidence="2">
    <location>
        <position position="686"/>
    </location>
</feature>
<feature type="modified residue" description="Phosphotyrosine" evidence="3">
    <location>
        <position position="827"/>
    </location>
</feature>
<feature type="modified residue" description="Phosphoserine" evidence="2">
    <location>
        <position position="884"/>
    </location>
</feature>
<feature type="modified residue" description="Phosphoserine" evidence="2">
    <location>
        <position position="885"/>
    </location>
</feature>
<feature type="modified residue" description="Phosphoserine" evidence="3">
    <location>
        <position position="1014"/>
    </location>
</feature>
<feature type="splice variant" id="VSP_008435" description="In isoform 2." evidence="15 16">
    <original>QQVPPRTSFRMDSSG</original>
    <variation>R</variation>
    <location>
        <begin position="757"/>
        <end position="771"/>
    </location>
</feature>
<feature type="sequence conflict" description="In Ref. 1; AAC05370." evidence="17" ref="1">
    <original>E</original>
    <variation>Q</variation>
    <location>
        <position position="1234"/>
    </location>
</feature>
<feature type="sequence conflict" description="In Ref. 1; AAC05370." evidence="17" ref="1">
    <original>G</original>
    <variation>C</variation>
    <location>
        <position position="1250"/>
    </location>
</feature>
<feature type="sequence conflict" description="In Ref. 1; AAC05370." evidence="17" ref="1">
    <original>E</original>
    <variation>K</variation>
    <location>
        <position position="1291"/>
    </location>
</feature>
<feature type="sequence conflict" description="In Ref. 1; AAC05370." evidence="17" ref="1">
    <original>P</original>
    <variation>L</variation>
    <location>
        <position position="1383"/>
    </location>
</feature>
<feature type="sequence conflict" description="In Ref. 1; AAC05370." evidence="17" ref="1">
    <original>FAGPGG</original>
    <variation>SADPAD</variation>
    <location>
        <begin position="1389"/>
        <end position="1394"/>
    </location>
</feature>
<feature type="sequence conflict" description="In Ref. 1; AAC05370." evidence="17" ref="1">
    <original>E</original>
    <variation>A</variation>
    <location>
        <position position="1401"/>
    </location>
</feature>
<feature type="sequence conflict" description="In Ref. 1; AAC05370." evidence="17" ref="1">
    <original>G</original>
    <variation>A</variation>
    <location>
        <position position="1411"/>
    </location>
</feature>
<feature type="sequence conflict" description="In Ref. 1; AAC05370." evidence="17" ref="1">
    <original>PG</original>
    <variation>SV</variation>
    <location>
        <begin position="1414"/>
        <end position="1415"/>
    </location>
</feature>
<feature type="sequence conflict" description="In Ref. 1; AAC05370." evidence="17" ref="1">
    <original>G</original>
    <variation>A</variation>
    <location>
        <position position="1420"/>
    </location>
</feature>
<feature type="sequence conflict" description="In Ref. 1; AAC05370." evidence="17" ref="1">
    <original>P</original>
    <variation>A</variation>
    <location>
        <position position="1423"/>
    </location>
</feature>
<feature type="sequence conflict" description="In Ref. 1; AAC05370." evidence="17" ref="1">
    <original>K</original>
    <variation>R</variation>
    <location>
        <position position="1426"/>
    </location>
</feature>
<feature type="sequence conflict" description="In Ref. 1; AAC05370." evidence="17" ref="1">
    <original>V</original>
    <variation>G</variation>
    <location>
        <position position="1429"/>
    </location>
</feature>
<feature type="sequence conflict" description="In Ref. 1; AAC05370." evidence="17" ref="1">
    <original>P</original>
    <variation>R</variation>
    <location>
        <position position="1437"/>
    </location>
</feature>
<feature type="strand" evidence="19">
    <location>
        <begin position="415"/>
        <end position="417"/>
    </location>
</feature>
<feature type="strand" evidence="19">
    <location>
        <begin position="422"/>
        <end position="430"/>
    </location>
</feature>
<feature type="strand" evidence="19">
    <location>
        <begin position="437"/>
        <end position="441"/>
    </location>
</feature>
<feature type="strand" evidence="19">
    <location>
        <begin position="444"/>
        <end position="447"/>
    </location>
</feature>
<feature type="strand" evidence="19">
    <location>
        <begin position="451"/>
        <end position="455"/>
    </location>
</feature>
<feature type="helix" evidence="19">
    <location>
        <begin position="460"/>
        <end position="463"/>
    </location>
</feature>
<feature type="strand" evidence="19">
    <location>
        <begin position="472"/>
        <end position="476"/>
    </location>
</feature>
<feature type="helix" evidence="19">
    <location>
        <begin position="486"/>
        <end position="494"/>
    </location>
</feature>
<feature type="strand" evidence="19">
    <location>
        <begin position="501"/>
        <end position="509"/>
    </location>
</feature>
<feature type="strand" evidence="21">
    <location>
        <begin position="604"/>
        <end position="609"/>
    </location>
</feature>
<feature type="strand" evidence="21">
    <location>
        <begin position="612"/>
        <end position="622"/>
    </location>
</feature>
<feature type="strand" evidence="21">
    <location>
        <begin position="625"/>
        <end position="632"/>
    </location>
</feature>
<feature type="helix" evidence="21">
    <location>
        <begin position="634"/>
        <end position="636"/>
    </location>
</feature>
<feature type="strand" evidence="21">
    <location>
        <begin position="645"/>
        <end position="649"/>
    </location>
</feature>
<feature type="helix" evidence="21">
    <location>
        <begin position="659"/>
        <end position="668"/>
    </location>
</feature>
<feature type="strand" evidence="21">
    <location>
        <begin position="673"/>
        <end position="680"/>
    </location>
</feature>
<feature type="strand" evidence="18">
    <location>
        <begin position="774"/>
        <end position="777"/>
    </location>
</feature>
<feature type="strand" evidence="18">
    <location>
        <begin position="780"/>
        <end position="787"/>
    </location>
</feature>
<feature type="strand" evidence="18">
    <location>
        <begin position="790"/>
        <end position="792"/>
    </location>
</feature>
<feature type="strand" evidence="18">
    <location>
        <begin position="803"/>
        <end position="807"/>
    </location>
</feature>
<feature type="helix" evidence="18">
    <location>
        <begin position="814"/>
        <end position="816"/>
    </location>
</feature>
<feature type="strand" evidence="18">
    <location>
        <begin position="824"/>
        <end position="828"/>
    </location>
</feature>
<feature type="helix" evidence="18">
    <location>
        <begin position="838"/>
        <end position="851"/>
    </location>
</feature>
<feature type="strand" evidence="18">
    <location>
        <begin position="853"/>
        <end position="861"/>
    </location>
</feature>
<feature type="strand" evidence="20">
    <location>
        <begin position="919"/>
        <end position="924"/>
    </location>
</feature>
<feature type="strand" evidence="20">
    <location>
        <begin position="933"/>
        <end position="936"/>
    </location>
</feature>
<feature type="strand" evidence="20">
    <location>
        <begin position="953"/>
        <end position="957"/>
    </location>
</feature>
<feature type="helix" evidence="20">
    <location>
        <begin position="964"/>
        <end position="966"/>
    </location>
</feature>
<feature type="strand" evidence="20">
    <location>
        <begin position="974"/>
        <end position="978"/>
    </location>
</feature>
<feature type="turn" evidence="20">
    <location>
        <begin position="983"/>
        <end position="985"/>
    </location>
</feature>
<feature type="helix" evidence="20">
    <location>
        <begin position="988"/>
        <end position="997"/>
    </location>
</feature>
<feature type="turn" evidence="20">
    <location>
        <begin position="998"/>
        <end position="1000"/>
    </location>
</feature>
<feature type="strand" evidence="20">
    <location>
        <begin position="1001"/>
        <end position="1006"/>
    </location>
</feature>
<feature type="strand" evidence="22">
    <location>
        <begin position="1156"/>
        <end position="1159"/>
    </location>
</feature>
<feature type="strand" evidence="22">
    <location>
        <begin position="1162"/>
        <end position="1164"/>
    </location>
</feature>
<feature type="turn" evidence="22">
    <location>
        <begin position="1165"/>
        <end position="1168"/>
    </location>
</feature>
<feature type="strand" evidence="22">
    <location>
        <begin position="1169"/>
        <end position="1172"/>
    </location>
</feature>
<feature type="helix" evidence="22">
    <location>
        <begin position="1181"/>
        <end position="1185"/>
    </location>
</feature>
<feature type="strand" evidence="22">
    <location>
        <begin position="1193"/>
        <end position="1197"/>
    </location>
</feature>
<feature type="helix" evidence="22">
    <location>
        <begin position="1207"/>
        <end position="1217"/>
    </location>
</feature>
<feature type="strand" evidence="22">
    <location>
        <begin position="1219"/>
        <end position="1221"/>
    </location>
</feature>
<feature type="strand" evidence="22">
    <location>
        <begin position="1223"/>
        <end position="1226"/>
    </location>
</feature>
<proteinExistence type="evidence at protein level"/>
<protein>
    <recommendedName>
        <fullName>Membrane-associated guanylate kinase, WW and PDZ domain-containing protein 2</fullName>
    </recommendedName>
    <alternativeName>
        <fullName>Atrophin-1-interacting protein 1</fullName>
        <shortName>AIP-1</shortName>
    </alternativeName>
    <alternativeName>
        <fullName>Atrophin-1-interacting protein A</fullName>
    </alternativeName>
    <alternativeName>
        <fullName>Membrane-associated guanylate kinase inverted 2</fullName>
        <shortName>MAGI-2</shortName>
    </alternativeName>
</protein>
<dbReference type="EMBL" id="AF038563">
    <property type="protein sequence ID" value="AAC05370.1"/>
    <property type="molecule type" value="mRNA"/>
</dbReference>
<dbReference type="EMBL" id="AB014605">
    <property type="protein sequence ID" value="BAA31680.2"/>
    <property type="status" value="ALT_INIT"/>
    <property type="molecule type" value="mRNA"/>
</dbReference>
<dbReference type="EMBL" id="AC004808">
    <property type="protein sequence ID" value="AAC23438.1"/>
    <property type="molecule type" value="Genomic_DNA"/>
</dbReference>
<dbReference type="EMBL" id="AC004945">
    <property type="protein sequence ID" value="AAC61488.1"/>
    <property type="molecule type" value="Genomic_DNA"/>
</dbReference>
<dbReference type="EMBL" id="AC004990">
    <property type="protein sequence ID" value="AAC79151.1"/>
    <property type="molecule type" value="Genomic_DNA"/>
</dbReference>
<dbReference type="EMBL" id="AC005246">
    <property type="protein sequence ID" value="AAC25530.1"/>
    <property type="molecule type" value="Genomic_DNA"/>
</dbReference>
<dbReference type="EMBL" id="AC006043">
    <property type="protein sequence ID" value="AAD15413.2"/>
    <property type="molecule type" value="Genomic_DNA"/>
</dbReference>
<dbReference type="EMBL" id="AC006324">
    <property type="protein sequence ID" value="AAF66080.1"/>
    <property type="molecule type" value="Genomic_DNA"/>
</dbReference>
<dbReference type="EMBL" id="AC007237">
    <property type="protein sequence ID" value="AAP21886.1"/>
    <property type="molecule type" value="Genomic_DNA"/>
</dbReference>
<dbReference type="EMBL" id="AC073200">
    <property type="protein sequence ID" value="AAP22360.1"/>
    <property type="molecule type" value="Genomic_DNA"/>
</dbReference>
<dbReference type="EMBL" id="CH236949">
    <property type="protein sequence ID" value="EAL24194.1"/>
    <property type="molecule type" value="Genomic_DNA"/>
</dbReference>
<dbReference type="EMBL" id="BC150277">
    <property type="protein sequence ID" value="AAI50278.1"/>
    <property type="molecule type" value="mRNA"/>
</dbReference>
<dbReference type="CCDS" id="CCDS5594.1">
    <molecule id="Q86UL8-1"/>
</dbReference>
<dbReference type="CCDS" id="CCDS75623.1">
    <molecule id="Q86UL8-2"/>
</dbReference>
<dbReference type="RefSeq" id="NP_001288057.1">
    <molecule id="Q86UL8-2"/>
    <property type="nucleotide sequence ID" value="NM_001301128.2"/>
</dbReference>
<dbReference type="RefSeq" id="NP_036433.2">
    <molecule id="Q86UL8-1"/>
    <property type="nucleotide sequence ID" value="NM_012301.3"/>
</dbReference>
<dbReference type="PDB" id="1UEP">
    <property type="method" value="NMR"/>
    <property type="chains" value="A=774-863"/>
</dbReference>
<dbReference type="PDB" id="1UEQ">
    <property type="method" value="NMR"/>
    <property type="chains" value="A=412-522"/>
</dbReference>
<dbReference type="PDB" id="1UEW">
    <property type="method" value="NMR"/>
    <property type="chains" value="A=915-1015"/>
</dbReference>
<dbReference type="PDB" id="1UJV">
    <property type="method" value="NMR"/>
    <property type="chains" value="A=600-682"/>
</dbReference>
<dbReference type="PDB" id="1WFV">
    <property type="method" value="NMR"/>
    <property type="chains" value="A=1141-1230"/>
</dbReference>
<dbReference type="PDBsum" id="1UEP"/>
<dbReference type="PDBsum" id="1UEQ"/>
<dbReference type="PDBsum" id="1UEW"/>
<dbReference type="PDBsum" id="1UJV"/>
<dbReference type="PDBsum" id="1WFV"/>
<dbReference type="SMR" id="Q86UL8"/>
<dbReference type="BioGRID" id="115197">
    <property type="interactions" value="33"/>
</dbReference>
<dbReference type="CORUM" id="Q86UL8"/>
<dbReference type="FunCoup" id="Q86UL8">
    <property type="interactions" value="975"/>
</dbReference>
<dbReference type="IntAct" id="Q86UL8">
    <property type="interactions" value="24"/>
</dbReference>
<dbReference type="MINT" id="Q86UL8"/>
<dbReference type="STRING" id="9606.ENSP00000346151"/>
<dbReference type="TCDB" id="8.A.24.1.6">
    <property type="family name" value="the ezrin/radixin/moesin-binding phosphoprotein 50 (ebp50) family"/>
</dbReference>
<dbReference type="GlyGen" id="Q86UL8">
    <property type="glycosylation" value="2 sites"/>
</dbReference>
<dbReference type="iPTMnet" id="Q86UL8"/>
<dbReference type="PhosphoSitePlus" id="Q86UL8"/>
<dbReference type="BioMuta" id="MAGI2"/>
<dbReference type="DMDM" id="88909269"/>
<dbReference type="jPOST" id="Q86UL8"/>
<dbReference type="MassIVE" id="Q86UL8"/>
<dbReference type="PaxDb" id="9606-ENSP00000346151"/>
<dbReference type="PeptideAtlas" id="Q86UL8"/>
<dbReference type="ProteomicsDB" id="69831">
    <molecule id="Q86UL8-1"/>
</dbReference>
<dbReference type="ProteomicsDB" id="69832">
    <molecule id="Q86UL8-2"/>
</dbReference>
<dbReference type="Antibodypedia" id="2880">
    <property type="antibodies" value="266 antibodies from 33 providers"/>
</dbReference>
<dbReference type="DNASU" id="9863"/>
<dbReference type="Ensembl" id="ENST00000354212.9">
    <molecule id="Q86UL8-1"/>
    <property type="protein sequence ID" value="ENSP00000346151.4"/>
    <property type="gene ID" value="ENSG00000187391.23"/>
</dbReference>
<dbReference type="Ensembl" id="ENST00000419488.5">
    <molecule id="Q86UL8-2"/>
    <property type="protein sequence ID" value="ENSP00000405766.1"/>
    <property type="gene ID" value="ENSG00000187391.23"/>
</dbReference>
<dbReference type="GeneID" id="9863"/>
<dbReference type="KEGG" id="hsa:9863"/>
<dbReference type="MANE-Select" id="ENST00000354212.9">
    <property type="protein sequence ID" value="ENSP00000346151.4"/>
    <property type="RefSeq nucleotide sequence ID" value="NM_012301.4"/>
    <property type="RefSeq protein sequence ID" value="NP_036433.2"/>
</dbReference>
<dbReference type="UCSC" id="uc003ugx.3">
    <molecule id="Q86UL8-1"/>
    <property type="organism name" value="human"/>
</dbReference>
<dbReference type="AGR" id="HGNC:18957"/>
<dbReference type="CTD" id="9863"/>
<dbReference type="DisGeNET" id="9863"/>
<dbReference type="GeneCards" id="MAGI2"/>
<dbReference type="HGNC" id="HGNC:18957">
    <property type="gene designation" value="MAGI2"/>
</dbReference>
<dbReference type="HPA" id="ENSG00000187391">
    <property type="expression patterns" value="Tissue enhanced (brain)"/>
</dbReference>
<dbReference type="MalaCards" id="MAGI2"/>
<dbReference type="MIM" id="606382">
    <property type="type" value="gene"/>
</dbReference>
<dbReference type="MIM" id="617609">
    <property type="type" value="phenotype"/>
</dbReference>
<dbReference type="neXtProt" id="NX_Q86UL8"/>
<dbReference type="OpenTargets" id="ENSG00000187391"/>
<dbReference type="Orphanet" id="656">
    <property type="disease" value="Hereditary steroid-resistant nephrotic syndrome"/>
</dbReference>
<dbReference type="PharmGKB" id="PA142671484"/>
<dbReference type="VEuPathDB" id="HostDB:ENSG00000187391"/>
<dbReference type="eggNOG" id="KOG3209">
    <property type="taxonomic scope" value="Eukaryota"/>
</dbReference>
<dbReference type="GeneTree" id="ENSGT00940000155057"/>
<dbReference type="InParanoid" id="Q86UL8"/>
<dbReference type="OMA" id="YLRTVPX"/>
<dbReference type="OrthoDB" id="9532168at2759"/>
<dbReference type="PAN-GO" id="Q86UL8">
    <property type="GO annotations" value="9 GO annotations based on evolutionary models"/>
</dbReference>
<dbReference type="PhylomeDB" id="Q86UL8"/>
<dbReference type="TreeFam" id="TF316816"/>
<dbReference type="PathwayCommons" id="Q86UL8"/>
<dbReference type="Reactome" id="R-HSA-373753">
    <property type="pathway name" value="Nephrin family interactions"/>
</dbReference>
<dbReference type="SignaLink" id="Q86UL8"/>
<dbReference type="SIGNOR" id="Q86UL8"/>
<dbReference type="BioGRID-ORCS" id="9863">
    <property type="hits" value="10 hits in 1152 CRISPR screens"/>
</dbReference>
<dbReference type="CD-CODE" id="936CAA69">
    <property type="entry name" value="Slit diaphragm condensate"/>
</dbReference>
<dbReference type="CD-CODE" id="FB4E32DD">
    <property type="entry name" value="Presynaptic clusters and postsynaptic densities"/>
</dbReference>
<dbReference type="ChiTaRS" id="MAGI2">
    <property type="organism name" value="human"/>
</dbReference>
<dbReference type="EvolutionaryTrace" id="Q86UL8"/>
<dbReference type="GeneWiki" id="MAGI2"/>
<dbReference type="GenomeRNAi" id="9863"/>
<dbReference type="Pharos" id="Q86UL8">
    <property type="development level" value="Tbio"/>
</dbReference>
<dbReference type="PRO" id="PR:Q86UL8"/>
<dbReference type="Proteomes" id="UP000005640">
    <property type="component" value="Chromosome 7"/>
</dbReference>
<dbReference type="RNAct" id="Q86UL8">
    <property type="molecule type" value="protein"/>
</dbReference>
<dbReference type="Bgee" id="ENSG00000187391">
    <property type="expression patterns" value="Expressed in calcaneal tendon and 187 other cell types or tissues"/>
</dbReference>
<dbReference type="ExpressionAtlas" id="Q86UL8">
    <property type="expression patterns" value="baseline and differential"/>
</dbReference>
<dbReference type="GO" id="GO:0005923">
    <property type="term" value="C:bicellular tight junction"/>
    <property type="evidence" value="ECO:0000314"/>
    <property type="project" value="UniProtKB"/>
</dbReference>
<dbReference type="GO" id="GO:0005911">
    <property type="term" value="C:cell-cell junction"/>
    <property type="evidence" value="ECO:0000318"/>
    <property type="project" value="GO_Central"/>
</dbReference>
<dbReference type="GO" id="GO:0005814">
    <property type="term" value="C:centriole"/>
    <property type="evidence" value="ECO:0000250"/>
    <property type="project" value="UniProtKB"/>
</dbReference>
<dbReference type="GO" id="GO:0005813">
    <property type="term" value="C:centrosome"/>
    <property type="evidence" value="ECO:0007669"/>
    <property type="project" value="UniProtKB-SubCell"/>
</dbReference>
<dbReference type="GO" id="GO:0097546">
    <property type="term" value="C:ciliary base"/>
    <property type="evidence" value="ECO:0000250"/>
    <property type="project" value="UniProtKB"/>
</dbReference>
<dbReference type="GO" id="GO:0005737">
    <property type="term" value="C:cytoplasm"/>
    <property type="evidence" value="ECO:0000314"/>
    <property type="project" value="UniProtKB"/>
</dbReference>
<dbReference type="GO" id="GO:0030425">
    <property type="term" value="C:dendrite"/>
    <property type="evidence" value="ECO:0000250"/>
    <property type="project" value="UniProtKB"/>
</dbReference>
<dbReference type="GO" id="GO:0005770">
    <property type="term" value="C:late endosome"/>
    <property type="evidence" value="ECO:0000250"/>
    <property type="project" value="UniProtKB"/>
</dbReference>
<dbReference type="GO" id="GO:0005634">
    <property type="term" value="C:nucleus"/>
    <property type="evidence" value="ECO:0000314"/>
    <property type="project" value="UniProtKB"/>
</dbReference>
<dbReference type="GO" id="GO:0048471">
    <property type="term" value="C:perinuclear region of cytoplasm"/>
    <property type="evidence" value="ECO:0000250"/>
    <property type="project" value="UniProtKB"/>
</dbReference>
<dbReference type="GO" id="GO:0001917">
    <property type="term" value="C:photoreceptor inner segment"/>
    <property type="evidence" value="ECO:0000250"/>
    <property type="project" value="UniProtKB"/>
</dbReference>
<dbReference type="GO" id="GO:0001750">
    <property type="term" value="C:photoreceptor outer segment"/>
    <property type="evidence" value="ECO:0000250"/>
    <property type="project" value="UniProtKB"/>
</dbReference>
<dbReference type="GO" id="GO:0005886">
    <property type="term" value="C:plasma membrane"/>
    <property type="evidence" value="ECO:0000314"/>
    <property type="project" value="UniProtKB"/>
</dbReference>
<dbReference type="GO" id="GO:0014069">
    <property type="term" value="C:postsynaptic density"/>
    <property type="evidence" value="ECO:0000250"/>
    <property type="project" value="UniProtKB"/>
</dbReference>
<dbReference type="GO" id="GO:0032991">
    <property type="term" value="C:protein-containing complex"/>
    <property type="evidence" value="ECO:0000250"/>
    <property type="project" value="UniProtKB"/>
</dbReference>
<dbReference type="GO" id="GO:0036057">
    <property type="term" value="C:slit diaphragm"/>
    <property type="evidence" value="ECO:0000250"/>
    <property type="project" value="UniProtKB"/>
</dbReference>
<dbReference type="GO" id="GO:0045202">
    <property type="term" value="C:synapse"/>
    <property type="evidence" value="ECO:0000250"/>
    <property type="project" value="UniProtKB"/>
</dbReference>
<dbReference type="GO" id="GO:0031697">
    <property type="term" value="F:beta-1 adrenergic receptor binding"/>
    <property type="evidence" value="ECO:0000353"/>
    <property type="project" value="UniProtKB"/>
</dbReference>
<dbReference type="GO" id="GO:0019902">
    <property type="term" value="F:phosphatase binding"/>
    <property type="evidence" value="ECO:0000353"/>
    <property type="project" value="UniProtKB"/>
</dbReference>
<dbReference type="GO" id="GO:0030159">
    <property type="term" value="F:signaling receptor complex adaptor activity"/>
    <property type="evidence" value="ECO:0000314"/>
    <property type="project" value="UniProtKB"/>
</dbReference>
<dbReference type="GO" id="GO:0046332">
    <property type="term" value="F:SMAD binding"/>
    <property type="evidence" value="ECO:0000250"/>
    <property type="project" value="UniProtKB"/>
</dbReference>
<dbReference type="GO" id="GO:0070699">
    <property type="term" value="F:type II activin receptor binding"/>
    <property type="evidence" value="ECO:0000250"/>
    <property type="project" value="UniProtKB"/>
</dbReference>
<dbReference type="GO" id="GO:1990090">
    <property type="term" value="P:cellular response to nerve growth factor stimulus"/>
    <property type="evidence" value="ECO:0000250"/>
    <property type="project" value="UniProtKB"/>
</dbReference>
<dbReference type="GO" id="GO:0072583">
    <property type="term" value="P:clathrin-dependent endocytosis"/>
    <property type="evidence" value="ECO:0000250"/>
    <property type="project" value="UniProtKB"/>
</dbReference>
<dbReference type="GO" id="GO:0032926">
    <property type="term" value="P:negative regulation of activin receptor signaling pathway"/>
    <property type="evidence" value="ECO:0000250"/>
    <property type="project" value="UniProtKB"/>
</dbReference>
<dbReference type="GO" id="GO:0030336">
    <property type="term" value="P:negative regulation of cell migration"/>
    <property type="evidence" value="ECO:0000250"/>
    <property type="project" value="UniProtKB"/>
</dbReference>
<dbReference type="GO" id="GO:0008285">
    <property type="term" value="P:negative regulation of cell population proliferation"/>
    <property type="evidence" value="ECO:0000250"/>
    <property type="project" value="UniProtKB"/>
</dbReference>
<dbReference type="GO" id="GO:0051898">
    <property type="term" value="P:negative regulation of phosphatidylinositol 3-kinase/protein kinase B signal transduction"/>
    <property type="evidence" value="ECO:0000314"/>
    <property type="project" value="UniProtKB"/>
</dbReference>
<dbReference type="GO" id="GO:0038180">
    <property type="term" value="P:nerve growth factor signaling pathway"/>
    <property type="evidence" value="ECO:0000250"/>
    <property type="project" value="UniProtKB"/>
</dbReference>
<dbReference type="GO" id="GO:0007399">
    <property type="term" value="P:nervous system development"/>
    <property type="evidence" value="ECO:0007669"/>
    <property type="project" value="UniProtKB-KW"/>
</dbReference>
<dbReference type="GO" id="GO:0072015">
    <property type="term" value="P:podocyte development"/>
    <property type="evidence" value="ECO:0000250"/>
    <property type="project" value="UniProtKB"/>
</dbReference>
<dbReference type="GO" id="GO:0010976">
    <property type="term" value="P:positive regulation of neuron projection development"/>
    <property type="evidence" value="ECO:0000250"/>
    <property type="project" value="UniProtKB"/>
</dbReference>
<dbReference type="GO" id="GO:0002092">
    <property type="term" value="P:positive regulation of receptor internalization"/>
    <property type="evidence" value="ECO:0000314"/>
    <property type="project" value="UniProtKB"/>
</dbReference>
<dbReference type="GO" id="GO:0043113">
    <property type="term" value="P:receptor clustering"/>
    <property type="evidence" value="ECO:0000250"/>
    <property type="project" value="UniProtKB"/>
</dbReference>
<dbReference type="GO" id="GO:0007165">
    <property type="term" value="P:signal transduction"/>
    <property type="evidence" value="ECO:0000318"/>
    <property type="project" value="GO_Central"/>
</dbReference>
<dbReference type="GO" id="GO:0060395">
    <property type="term" value="P:SMAD protein signal transduction"/>
    <property type="evidence" value="ECO:0000250"/>
    <property type="project" value="UniProtKB"/>
</dbReference>
<dbReference type="GO" id="GO:0060071">
    <property type="term" value="P:Wnt signaling pathway, planar cell polarity pathway"/>
    <property type="evidence" value="ECO:0000303"/>
    <property type="project" value="UniProtKB"/>
</dbReference>
<dbReference type="CDD" id="cd06730">
    <property type="entry name" value="PDZ0_MAGI-1_3-like"/>
    <property type="match status" value="1"/>
</dbReference>
<dbReference type="CDD" id="cd06731">
    <property type="entry name" value="PDZ1_MAGI-1_3-like"/>
    <property type="match status" value="1"/>
</dbReference>
<dbReference type="CDD" id="cd06732">
    <property type="entry name" value="PDZ2_MAGI-1_3-like"/>
    <property type="match status" value="1"/>
</dbReference>
<dbReference type="CDD" id="cd06733">
    <property type="entry name" value="PDZ3_MAGI-1_3-like"/>
    <property type="match status" value="1"/>
</dbReference>
<dbReference type="CDD" id="cd06734">
    <property type="entry name" value="PDZ4_MAGI-1_3-like"/>
    <property type="match status" value="1"/>
</dbReference>
<dbReference type="CDD" id="cd06735">
    <property type="entry name" value="PDZ5_MAGI-1_3-like"/>
    <property type="match status" value="1"/>
</dbReference>
<dbReference type="CDD" id="cd00201">
    <property type="entry name" value="WW"/>
    <property type="match status" value="2"/>
</dbReference>
<dbReference type="FunFam" id="2.30.42.10:FF:000005">
    <property type="entry name" value="Membrane associated guanylate kinase, WW and PDZ domain containing 1"/>
    <property type="match status" value="1"/>
</dbReference>
<dbReference type="FunFam" id="2.30.42.10:FF:000006">
    <property type="entry name" value="Membrane associated guanylate kinase, WW and PDZ domain containing 1"/>
    <property type="match status" value="1"/>
</dbReference>
<dbReference type="FunFam" id="2.30.42.10:FF:000113">
    <property type="entry name" value="Membrane associated guanylate kinase, WW and PDZ domain containing 2"/>
    <property type="match status" value="1"/>
</dbReference>
<dbReference type="FunFam" id="2.30.42.10:FF:000144">
    <property type="entry name" value="Membrane associated guanylate kinase, WW and PDZ domain containing 2"/>
    <property type="match status" value="1"/>
</dbReference>
<dbReference type="FunFam" id="2.30.42.10:FF:000150">
    <property type="entry name" value="Membrane associated guanylate kinase, WW and PDZ domain containing 2"/>
    <property type="match status" value="1"/>
</dbReference>
<dbReference type="FunFam" id="2.20.70.10:FF:000001">
    <property type="entry name" value="Membrane-associated guanylate kinase, WW and PDZ domain-containing protein 1"/>
    <property type="match status" value="1"/>
</dbReference>
<dbReference type="FunFam" id="2.30.42.10:FF:000155">
    <property type="entry name" value="membrane-associated guanylate kinase, WW and PDZ domain-containing protein 2 isoform X4"/>
    <property type="match status" value="1"/>
</dbReference>
<dbReference type="FunFam" id="2.20.70.10:FF:000002">
    <property type="entry name" value="Membrane-associated guanylate kinase, WW and PDZ domain-containing protein 3 isoform 1"/>
    <property type="match status" value="1"/>
</dbReference>
<dbReference type="FunFam" id="3.30.63.10:FF:000003">
    <property type="entry name" value="Membrane-associated guanylate kinase, WW and PDZ domain-containing protein 3 isoform 1"/>
    <property type="match status" value="1"/>
</dbReference>
<dbReference type="Gene3D" id="2.20.70.10">
    <property type="match status" value="2"/>
</dbReference>
<dbReference type="Gene3D" id="2.30.42.10">
    <property type="match status" value="6"/>
</dbReference>
<dbReference type="Gene3D" id="3.30.63.10">
    <property type="entry name" value="Guanylate Kinase phosphate binding domain"/>
    <property type="match status" value="1"/>
</dbReference>
<dbReference type="InterPro" id="IPR008145">
    <property type="entry name" value="GK/Ca_channel_bsu"/>
</dbReference>
<dbReference type="InterPro" id="IPR008144">
    <property type="entry name" value="Guanylate_kin-like_dom"/>
</dbReference>
<dbReference type="InterPro" id="IPR020590">
    <property type="entry name" value="Guanylate_kinase_CS"/>
</dbReference>
<dbReference type="InterPro" id="IPR027417">
    <property type="entry name" value="P-loop_NTPase"/>
</dbReference>
<dbReference type="InterPro" id="IPR001478">
    <property type="entry name" value="PDZ"/>
</dbReference>
<dbReference type="InterPro" id="IPR036034">
    <property type="entry name" value="PDZ_sf"/>
</dbReference>
<dbReference type="InterPro" id="IPR001202">
    <property type="entry name" value="WW_dom"/>
</dbReference>
<dbReference type="InterPro" id="IPR036020">
    <property type="entry name" value="WW_dom_sf"/>
</dbReference>
<dbReference type="PANTHER" id="PTHR10316">
    <property type="entry name" value="MEMBRANE ASSOCIATED GUANYLATE KINASE-RELATED"/>
    <property type="match status" value="1"/>
</dbReference>
<dbReference type="PANTHER" id="PTHR10316:SF27">
    <property type="entry name" value="MEMBRANE-ASSOCIATED GUANYLATE KINASE, WW AND PDZ DOMAIN-CONTAINING PROTEIN 2"/>
    <property type="match status" value="1"/>
</dbReference>
<dbReference type="Pfam" id="PF00625">
    <property type="entry name" value="Guanylate_kin"/>
    <property type="match status" value="1"/>
</dbReference>
<dbReference type="Pfam" id="PF16663">
    <property type="entry name" value="MAGI_u1"/>
    <property type="match status" value="1"/>
</dbReference>
<dbReference type="Pfam" id="PF00595">
    <property type="entry name" value="PDZ"/>
    <property type="match status" value="6"/>
</dbReference>
<dbReference type="Pfam" id="PF00397">
    <property type="entry name" value="WW"/>
    <property type="match status" value="1"/>
</dbReference>
<dbReference type="SMART" id="SM00072">
    <property type="entry name" value="GuKc"/>
    <property type="match status" value="1"/>
</dbReference>
<dbReference type="SMART" id="SM00228">
    <property type="entry name" value="PDZ"/>
    <property type="match status" value="6"/>
</dbReference>
<dbReference type="SMART" id="SM00456">
    <property type="entry name" value="WW"/>
    <property type="match status" value="2"/>
</dbReference>
<dbReference type="SUPFAM" id="SSF52540">
    <property type="entry name" value="P-loop containing nucleoside triphosphate hydrolases"/>
    <property type="match status" value="1"/>
</dbReference>
<dbReference type="SUPFAM" id="SSF50156">
    <property type="entry name" value="PDZ domain-like"/>
    <property type="match status" value="6"/>
</dbReference>
<dbReference type="SUPFAM" id="SSF51045">
    <property type="entry name" value="WW domain"/>
    <property type="match status" value="2"/>
</dbReference>
<dbReference type="PROSITE" id="PS00856">
    <property type="entry name" value="GUANYLATE_KINASE_1"/>
    <property type="match status" value="1"/>
</dbReference>
<dbReference type="PROSITE" id="PS50052">
    <property type="entry name" value="GUANYLATE_KINASE_2"/>
    <property type="match status" value="1"/>
</dbReference>
<dbReference type="PROSITE" id="PS50106">
    <property type="entry name" value="PDZ"/>
    <property type="match status" value="6"/>
</dbReference>
<dbReference type="PROSITE" id="PS01159">
    <property type="entry name" value="WW_DOMAIN_1"/>
    <property type="match status" value="2"/>
</dbReference>
<dbReference type="PROSITE" id="PS50020">
    <property type="entry name" value="WW_DOMAIN_2"/>
    <property type="match status" value="2"/>
</dbReference>
<evidence type="ECO:0000250" key="1"/>
<evidence type="ECO:0000250" key="2">
    <source>
        <dbReference type="UniProtKB" id="O88382"/>
    </source>
</evidence>
<evidence type="ECO:0000250" key="3">
    <source>
        <dbReference type="UniProtKB" id="Q9WVQ1"/>
    </source>
</evidence>
<evidence type="ECO:0000255" key="4">
    <source>
        <dbReference type="PROSITE-ProRule" id="PRU00100"/>
    </source>
</evidence>
<evidence type="ECO:0000255" key="5">
    <source>
        <dbReference type="PROSITE-ProRule" id="PRU00143"/>
    </source>
</evidence>
<evidence type="ECO:0000255" key="6">
    <source>
        <dbReference type="PROSITE-ProRule" id="PRU00224"/>
    </source>
</evidence>
<evidence type="ECO:0000256" key="7">
    <source>
        <dbReference type="SAM" id="MobiDB-lite"/>
    </source>
</evidence>
<evidence type="ECO:0000269" key="8">
    <source>
    </source>
</evidence>
<evidence type="ECO:0000269" key="9">
    <source>
    </source>
</evidence>
<evidence type="ECO:0000269" key="10">
    <source>
    </source>
</evidence>
<evidence type="ECO:0000269" key="11">
    <source>
    </source>
</evidence>
<evidence type="ECO:0000269" key="12">
    <source>
    </source>
</evidence>
<evidence type="ECO:0000269" key="13">
    <source>
    </source>
</evidence>
<evidence type="ECO:0000269" key="14">
    <source>
    </source>
</evidence>
<evidence type="ECO:0000303" key="15">
    <source>
    </source>
</evidence>
<evidence type="ECO:0000303" key="16">
    <source>
    </source>
</evidence>
<evidence type="ECO:0000305" key="17"/>
<evidence type="ECO:0007829" key="18">
    <source>
        <dbReference type="PDB" id="1UEP"/>
    </source>
</evidence>
<evidence type="ECO:0007829" key="19">
    <source>
        <dbReference type="PDB" id="1UEQ"/>
    </source>
</evidence>
<evidence type="ECO:0007829" key="20">
    <source>
        <dbReference type="PDB" id="1UEW"/>
    </source>
</evidence>
<evidence type="ECO:0007829" key="21">
    <source>
        <dbReference type="PDB" id="1UJV"/>
    </source>
</evidence>
<evidence type="ECO:0007829" key="22">
    <source>
        <dbReference type="PDB" id="1WFV"/>
    </source>
</evidence>
<sequence length="1455" mass="158754">MSKSLKKKSHWTSKVHESVIGRNPEGQLGFELKGGAENGQFPYLGEVKPGKVAYESGSKLVSEELLLEVNETPVAGLTIRDVLAVIKHCKDPLRLKCVKQGGIVDKDLRHYLNLRFQKGSVDHELQQIIRDNLYLRTVPCTTRPHKEGEVPGVDYIFITVEDFMELEKSGALLESGTYEDNYYGTPKPPAEPAPLLLNVTDQILPGATPSAEGKRKRNKSVSNMEKASIEPPEEEEEERPVVNGNGVVVTPESSEHEDKSAGASGEMPSQPYPAPVYSQPEELKEQMDDTKPTKPEDNEEPDPLPDNWEMAYTEKGEVYFIDHNTKTTSWLDPRLAKKAKPPEECKENELPYGWEKIDDPIYGTYYVDHINRRTQFENPVLEAKRKLQQHNMPHTELGTKPLQAPGFREKPLFTRDASQLKGTFLSTTLKKSNMGFGFTIIGGDEPDEFLQVKSVIPDGPAAQDGKMETGDVIVYINEVCVLGHTHADVVKLFQSVPIGQSVNLVLCRGYPLPFDPEDPANSMVPPLAIMERPPPVMVNGRHNYETYLEYISRTSQSVPDITDRPPHSLHSMPTDGQLDGTYPPPVHDDNVSMASSGATQAELMTLTIVKGAQGFGFTIADSPTGQRVKQILDIQGCPGLCEGDLIVEINQQNVQNLSHTEVVDILKDCPIGSETSLIIHRGGFFSPWKTPKPIMDRWENQGSPQTSLSAPAIPQNLPFPPALHRSSFPDSTEAFDPRKPDPYELYEKSRAIYESRQQVPPRTSFRMDSSGPDYKELDVHLRRMESGFGFRILGGDEPGQPILIGAVIAMGSADRDGRLHPGDELVYVDGIPVAGKTHRYVIDLMHHAARNGQVNLTVRRKVLCGGEPCPENGRSPGSVSTHHSSPRSDYATYTNSNHAAPSSNASPPEGFASHSLQTSDVVIHRKENEGFGFVIISSLNRPESGSTITVPHKIGRIIDGSPADRCAKLKVGDRILAVNGQSIINMPHADIVKLIKDAGLSVTLRIIPQEELNSPTSAPSSEKQSPMAQQSPLAQQSPLAQPSPATPNSPIAQPAPPQPLQLQGHENSYRSEVKARQDVKPDIRQPPFTDYRQPPLDYRQPPGGDYQQPPPLDYRQPPLLDYRQHSPDTRQYPLSDYRQPQDFDYFTVDMEKGAKGFGFSIRGGREYKMDLYVLRLAEDGPAIRNGRMRVGDQIIEINGESTRDMTHARAIELIKSGGRRVRLLLKRGTGQVPEYDEPAPWSSPAAAAPGLPEVGVSLDDGLAPFSPSHPAPPSDPSHQISPGPTWDIKREHDVRKPKELSACGQKKQRLGEQRERSASPQRAARPRLEEAPGGQGRPEAGRPASEARAPGLAAADAADAARAGGKEAPRAAAGSELCRREGPGAAPAFAGPGGGGSGALEAEGRAGARAGPRPGPRPPGGAPARKAAVAPGPWKVPGSDKLPSVLKPGASAASR</sequence>
<gene>
    <name type="primary">MAGI2</name>
    <name type="synonym">ACVRINP1</name>
    <name type="synonym">AIP1</name>
    <name type="synonym">KIAA0705</name>
</gene>
<name>MAGI2_HUMAN</name>
<accession>Q86UL8</accession>
<accession>A4D1C1</accession>
<accession>A7E2C3</accession>
<accession>O60434</accession>
<accession>O60510</accession>
<accession>Q86UI7</accession>
<accession>Q9NP44</accession>
<accession>Q9UDQ5</accession>
<accession>Q9UDU1</accession>